<proteinExistence type="inferred from homology"/>
<organism>
    <name type="scientific">Escherichia coli (strain K12)</name>
    <dbReference type="NCBI Taxonomy" id="83333"/>
    <lineage>
        <taxon>Bacteria</taxon>
        <taxon>Pseudomonadati</taxon>
        <taxon>Pseudomonadota</taxon>
        <taxon>Gammaproteobacteria</taxon>
        <taxon>Enterobacterales</taxon>
        <taxon>Enterobacteriaceae</taxon>
        <taxon>Escherichia</taxon>
    </lineage>
</organism>
<comment type="subcellular location">
    <subcellularLocation>
        <location evidence="1">Cytoplasm</location>
        <location evidence="1">Cytosol</location>
    </subcellularLocation>
</comment>
<comment type="similarity">
    <text evidence="1">Belongs to the FliS family.</text>
</comment>
<evidence type="ECO:0000305" key="1"/>
<dbReference type="EMBL" id="M85240">
    <property type="protein sequence ID" value="AAA23791.1"/>
    <property type="molecule type" value="Genomic_DNA"/>
</dbReference>
<dbReference type="EMBL" id="U00096">
    <property type="protein sequence ID" value="AAC74992.1"/>
    <property type="molecule type" value="Genomic_DNA"/>
</dbReference>
<dbReference type="EMBL" id="AP009048">
    <property type="protein sequence ID" value="BAA15753.1"/>
    <property type="molecule type" value="Genomic_DNA"/>
</dbReference>
<dbReference type="PIR" id="B64956">
    <property type="entry name" value="B64956"/>
</dbReference>
<dbReference type="RefSeq" id="NP_416435.1">
    <property type="nucleotide sequence ID" value="NC_000913.3"/>
</dbReference>
<dbReference type="RefSeq" id="WP_000270671.1">
    <property type="nucleotide sequence ID" value="NZ_LN832404.1"/>
</dbReference>
<dbReference type="SMR" id="P26608"/>
<dbReference type="BioGRID" id="4263543">
    <property type="interactions" value="24"/>
</dbReference>
<dbReference type="FunCoup" id="P26608">
    <property type="interactions" value="71"/>
</dbReference>
<dbReference type="IntAct" id="P26608">
    <property type="interactions" value="19"/>
</dbReference>
<dbReference type="STRING" id="511145.b1925"/>
<dbReference type="PaxDb" id="511145-b1925"/>
<dbReference type="EnsemblBacteria" id="AAC74992">
    <property type="protein sequence ID" value="AAC74992"/>
    <property type="gene ID" value="b1925"/>
</dbReference>
<dbReference type="GeneID" id="946429"/>
<dbReference type="KEGG" id="ecj:JW1910"/>
<dbReference type="KEGG" id="eco:b1925"/>
<dbReference type="KEGG" id="ecoc:C3026_10920"/>
<dbReference type="PATRIC" id="fig|1411691.4.peg.324"/>
<dbReference type="EchoBASE" id="EB1361"/>
<dbReference type="eggNOG" id="COG1516">
    <property type="taxonomic scope" value="Bacteria"/>
</dbReference>
<dbReference type="HOGENOM" id="CLU_080373_1_0_6"/>
<dbReference type="InParanoid" id="P26608"/>
<dbReference type="OMA" id="EFRDTWK"/>
<dbReference type="OrthoDB" id="9792010at2"/>
<dbReference type="PhylomeDB" id="P26608"/>
<dbReference type="BioCyc" id="EcoCyc:EG11388-MONOMER"/>
<dbReference type="PRO" id="PR:P26608"/>
<dbReference type="Proteomes" id="UP000000625">
    <property type="component" value="Chromosome"/>
</dbReference>
<dbReference type="GO" id="GO:0005829">
    <property type="term" value="C:cytosol"/>
    <property type="evidence" value="ECO:0007669"/>
    <property type="project" value="UniProtKB-SubCell"/>
</dbReference>
<dbReference type="GO" id="GO:0044780">
    <property type="term" value="P:bacterial-type flagellum assembly"/>
    <property type="evidence" value="ECO:0007669"/>
    <property type="project" value="InterPro"/>
</dbReference>
<dbReference type="GO" id="GO:0071973">
    <property type="term" value="P:bacterial-type flagellum-dependent cell motility"/>
    <property type="evidence" value="ECO:0000315"/>
    <property type="project" value="EcoCyc"/>
</dbReference>
<dbReference type="CDD" id="cd16098">
    <property type="entry name" value="FliS"/>
    <property type="match status" value="1"/>
</dbReference>
<dbReference type="FunFam" id="1.20.120.340:FF:000001">
    <property type="entry name" value="Flagellar secretion chaperone FliS"/>
    <property type="match status" value="1"/>
</dbReference>
<dbReference type="Gene3D" id="1.20.120.340">
    <property type="entry name" value="Flagellar protein FliS"/>
    <property type="match status" value="1"/>
</dbReference>
<dbReference type="InterPro" id="IPR003713">
    <property type="entry name" value="FliS"/>
</dbReference>
<dbReference type="InterPro" id="IPR036584">
    <property type="entry name" value="FliS_sf"/>
</dbReference>
<dbReference type="NCBIfam" id="TIGR00208">
    <property type="entry name" value="fliS"/>
    <property type="match status" value="1"/>
</dbReference>
<dbReference type="PANTHER" id="PTHR34773">
    <property type="entry name" value="FLAGELLAR SECRETION CHAPERONE FLIS"/>
    <property type="match status" value="1"/>
</dbReference>
<dbReference type="PANTHER" id="PTHR34773:SF1">
    <property type="entry name" value="FLAGELLAR SECRETION CHAPERONE FLIS"/>
    <property type="match status" value="1"/>
</dbReference>
<dbReference type="Pfam" id="PF02561">
    <property type="entry name" value="FliS"/>
    <property type="match status" value="1"/>
</dbReference>
<dbReference type="PIRSF" id="PIRSF039090">
    <property type="entry name" value="Flis"/>
    <property type="match status" value="1"/>
</dbReference>
<dbReference type="SUPFAM" id="SSF101116">
    <property type="entry name" value="Flagellar export chaperone FliS"/>
    <property type="match status" value="1"/>
</dbReference>
<sequence>MYAAKGTQAYAQIGVESAVMSASQQQLVTMLFDGVLSALVRASLFMQDNNQQGKGVSLSKAINIIENGLRVSLDEESKDELTQNLIALYSYMVRRLLQANLRNDVSAVEEVEALMRNIADAWKESLLSPSLIQDPV</sequence>
<accession>P26608</accession>
<keyword id="KW-1005">Bacterial flagellum biogenesis</keyword>
<keyword id="KW-0143">Chaperone</keyword>
<keyword id="KW-0963">Cytoplasm</keyword>
<keyword id="KW-1185">Reference proteome</keyword>
<name>FLIS_ECOLI</name>
<gene>
    <name type="primary">fliS</name>
    <name type="ordered locus">b1925</name>
    <name type="ordered locus">JW1910</name>
</gene>
<feature type="chain" id="PRO_0000180968" description="Flagellar secretion chaperone FliS">
    <location>
        <begin position="1"/>
        <end position="136"/>
    </location>
</feature>
<protein>
    <recommendedName>
        <fullName>Flagellar secretion chaperone FliS</fullName>
    </recommendedName>
</protein>
<reference key="1">
    <citation type="journal article" date="1992" name="J. Gen. Microbiol.">
        <title>Subdivision of flagellar region III of the Escherichia coli and Salmonella typhimurium chromosomes and identification of two additional flagellar genes.</title>
        <authorList>
            <person name="Kawagishi I."/>
            <person name="Mueller V."/>
            <person name="Williams A.W."/>
            <person name="Irikura V.M."/>
            <person name="Macnab R.M."/>
        </authorList>
    </citation>
    <scope>NUCLEOTIDE SEQUENCE [GENOMIC DNA]</scope>
    <source>
        <strain>JA11</strain>
    </source>
</reference>
<reference key="2">
    <citation type="journal article" date="1996" name="DNA Res.">
        <title>A 460-kb DNA sequence of the Escherichia coli K-12 genome corresponding to the 40.1-50.0 min region on the linkage map.</title>
        <authorList>
            <person name="Itoh T."/>
            <person name="Aiba H."/>
            <person name="Baba T."/>
            <person name="Fujita K."/>
            <person name="Hayashi K."/>
            <person name="Inada T."/>
            <person name="Isono K."/>
            <person name="Kasai H."/>
            <person name="Kimura S."/>
            <person name="Kitakawa M."/>
            <person name="Kitagawa M."/>
            <person name="Makino K."/>
            <person name="Miki T."/>
            <person name="Mizobuchi K."/>
            <person name="Mori H."/>
            <person name="Mori T."/>
            <person name="Motomura K."/>
            <person name="Nakade S."/>
            <person name="Nakamura Y."/>
            <person name="Nashimoto H."/>
            <person name="Nishio Y."/>
            <person name="Oshima T."/>
            <person name="Saito N."/>
            <person name="Sampei G."/>
            <person name="Seki Y."/>
            <person name="Sivasundaram S."/>
            <person name="Tagami H."/>
            <person name="Takeda J."/>
            <person name="Takemoto K."/>
            <person name="Wada C."/>
            <person name="Yamamoto Y."/>
            <person name="Horiuchi T."/>
        </authorList>
    </citation>
    <scope>NUCLEOTIDE SEQUENCE [LARGE SCALE GENOMIC DNA]</scope>
    <source>
        <strain>K12 / W3110 / ATCC 27325 / DSM 5911</strain>
    </source>
</reference>
<reference key="3">
    <citation type="journal article" date="1997" name="Science">
        <title>The complete genome sequence of Escherichia coli K-12.</title>
        <authorList>
            <person name="Blattner F.R."/>
            <person name="Plunkett G. III"/>
            <person name="Bloch C.A."/>
            <person name="Perna N.T."/>
            <person name="Burland V."/>
            <person name="Riley M."/>
            <person name="Collado-Vides J."/>
            <person name="Glasner J.D."/>
            <person name="Rode C.K."/>
            <person name="Mayhew G.F."/>
            <person name="Gregor J."/>
            <person name="Davis N.W."/>
            <person name="Kirkpatrick H.A."/>
            <person name="Goeden M.A."/>
            <person name="Rose D.J."/>
            <person name="Mau B."/>
            <person name="Shao Y."/>
        </authorList>
    </citation>
    <scope>NUCLEOTIDE SEQUENCE [LARGE SCALE GENOMIC DNA]</scope>
    <source>
        <strain>K12 / MG1655 / ATCC 47076</strain>
    </source>
</reference>
<reference key="4">
    <citation type="journal article" date="2006" name="Mol. Syst. Biol.">
        <title>Highly accurate genome sequences of Escherichia coli K-12 strains MG1655 and W3110.</title>
        <authorList>
            <person name="Hayashi K."/>
            <person name="Morooka N."/>
            <person name="Yamamoto Y."/>
            <person name="Fujita K."/>
            <person name="Isono K."/>
            <person name="Choi S."/>
            <person name="Ohtsubo E."/>
            <person name="Baba T."/>
            <person name="Wanner B.L."/>
            <person name="Mori H."/>
            <person name="Horiuchi T."/>
        </authorList>
    </citation>
    <scope>NUCLEOTIDE SEQUENCE [LARGE SCALE GENOMIC DNA]</scope>
    <source>
        <strain>K12 / W3110 / ATCC 27325 / DSM 5911</strain>
    </source>
</reference>